<name>GLMS_STAAS</name>
<accession>Q6G7F8</accession>
<protein>
    <recommendedName>
        <fullName evidence="1">Glutamine--fructose-6-phosphate aminotransferase [isomerizing]</fullName>
        <ecNumber evidence="1">2.6.1.16</ecNumber>
    </recommendedName>
    <alternativeName>
        <fullName evidence="1">D-fructose-6-phosphate amidotransferase</fullName>
    </alternativeName>
    <alternativeName>
        <fullName evidence="1">GFAT</fullName>
    </alternativeName>
    <alternativeName>
        <fullName evidence="1">Glucosamine-6-phosphate synthase</fullName>
    </alternativeName>
    <alternativeName>
        <fullName evidence="1">Hexosephosphate aminotransferase</fullName>
    </alternativeName>
    <alternativeName>
        <fullName evidence="1">L-glutamine--D-fructose-6-phosphate amidotransferase</fullName>
    </alternativeName>
</protein>
<comment type="function">
    <text evidence="1">Catalyzes the first step in hexosamine metabolism, converting fructose-6P into glucosamine-6P using glutamine as a nitrogen source.</text>
</comment>
<comment type="catalytic activity">
    <reaction evidence="1">
        <text>D-fructose 6-phosphate + L-glutamine = D-glucosamine 6-phosphate + L-glutamate</text>
        <dbReference type="Rhea" id="RHEA:13237"/>
        <dbReference type="ChEBI" id="CHEBI:29985"/>
        <dbReference type="ChEBI" id="CHEBI:58359"/>
        <dbReference type="ChEBI" id="CHEBI:58725"/>
        <dbReference type="ChEBI" id="CHEBI:61527"/>
        <dbReference type="EC" id="2.6.1.16"/>
    </reaction>
</comment>
<comment type="subunit">
    <text evidence="1">Homodimer.</text>
</comment>
<comment type="subcellular location">
    <subcellularLocation>
        <location evidence="1">Cytoplasm</location>
    </subcellularLocation>
</comment>
<sequence length="601" mass="65850">MCGIVGYIGYDNAKELLLKGLEKLEYRGYDSAGIAVVNDDNTTVFKEKGRIAELRKVADSSDFDGPVGIGHTRWATHGVPNHENSHPHQSSNGRFTLVHNGVIENYEELKGEYLQGVSFISETDTEVIVQLVEYFSNQGLSTEEAFTKVVSLLHGSYALGLLDAEDKDTIYVAKNKSPLLLGVGEGFNVIASDALAMLQVTSEYKEIHDHEIVIVKKDEVIIKDADGNVVERDSYIAEIDASDAEKGVYAHYMLKEIHEQPAVMRRIIQEYQDAEGNLKIDQDIINDVKEADRIYVIAAGTSYHAGLVGKEFLEKWAGVPTEVHVASEFVYNMPLLSEKPLFVYISQSGETADSRAVLVETNKLGHKSLTITNVAGSTLSREADHTLLLHAGPEIAVASTKAYTAQIAVLSILSQIVAKEHGREADIDLLRELAKVTTAIEAIVDDAPIMEQIATDFLETTRNAFFIGRTIDYNVSLEGALKLKEISYIQAEGFAGGELKHGTIALIEEGTPVVGLATQEKVNLSIRGNVKEVVARGAHPCIISMEGLEKEGDTYVIPHVHELLTPLVSVVALQLISYYAALHRDLDVDKPRNLAKSVTVE</sequence>
<keyword id="KW-0032">Aminotransferase</keyword>
<keyword id="KW-0963">Cytoplasm</keyword>
<keyword id="KW-0315">Glutamine amidotransferase</keyword>
<keyword id="KW-0677">Repeat</keyword>
<keyword id="KW-0808">Transferase</keyword>
<feature type="initiator methionine" description="Removed" evidence="1">
    <location>
        <position position="1"/>
    </location>
</feature>
<feature type="chain" id="PRO_0000135383" description="Glutamine--fructose-6-phosphate aminotransferase [isomerizing]">
    <location>
        <begin position="2"/>
        <end position="601"/>
    </location>
</feature>
<feature type="domain" description="Glutamine amidotransferase type-2" evidence="1">
    <location>
        <begin position="2"/>
        <end position="218"/>
    </location>
</feature>
<feature type="domain" description="SIS 1" evidence="1">
    <location>
        <begin position="284"/>
        <end position="423"/>
    </location>
</feature>
<feature type="domain" description="SIS 2" evidence="1">
    <location>
        <begin position="453"/>
        <end position="591"/>
    </location>
</feature>
<feature type="active site" description="Nucleophile; for GATase activity" evidence="1">
    <location>
        <position position="2"/>
    </location>
</feature>
<feature type="active site" description="For Fru-6P isomerization activity" evidence="1">
    <location>
        <position position="596"/>
    </location>
</feature>
<proteinExistence type="inferred from homology"/>
<reference key="1">
    <citation type="journal article" date="2004" name="Proc. Natl. Acad. Sci. U.S.A.">
        <title>Complete genomes of two clinical Staphylococcus aureus strains: evidence for the rapid evolution of virulence and drug resistance.</title>
        <authorList>
            <person name="Holden M.T.G."/>
            <person name="Feil E.J."/>
            <person name="Lindsay J.A."/>
            <person name="Peacock S.J."/>
            <person name="Day N.P.J."/>
            <person name="Enright M.C."/>
            <person name="Foster T.J."/>
            <person name="Moore C.E."/>
            <person name="Hurst L."/>
            <person name="Atkin R."/>
            <person name="Barron A."/>
            <person name="Bason N."/>
            <person name="Bentley S.D."/>
            <person name="Chillingworth C."/>
            <person name="Chillingworth T."/>
            <person name="Churcher C."/>
            <person name="Clark L."/>
            <person name="Corton C."/>
            <person name="Cronin A."/>
            <person name="Doggett J."/>
            <person name="Dowd L."/>
            <person name="Feltwell T."/>
            <person name="Hance Z."/>
            <person name="Harris B."/>
            <person name="Hauser H."/>
            <person name="Holroyd S."/>
            <person name="Jagels K."/>
            <person name="James K.D."/>
            <person name="Lennard N."/>
            <person name="Line A."/>
            <person name="Mayes R."/>
            <person name="Moule S."/>
            <person name="Mungall K."/>
            <person name="Ormond D."/>
            <person name="Quail M.A."/>
            <person name="Rabbinowitsch E."/>
            <person name="Rutherford K.M."/>
            <person name="Sanders M."/>
            <person name="Sharp S."/>
            <person name="Simmonds M."/>
            <person name="Stevens K."/>
            <person name="Whitehead S."/>
            <person name="Barrell B.G."/>
            <person name="Spratt B.G."/>
            <person name="Parkhill J."/>
        </authorList>
    </citation>
    <scope>NUCLEOTIDE SEQUENCE [LARGE SCALE GENOMIC DNA]</scope>
    <source>
        <strain>MSSA476</strain>
    </source>
</reference>
<gene>
    <name evidence="1" type="primary">glmS</name>
    <name type="ordered locus">SAS2055</name>
</gene>
<evidence type="ECO:0000255" key="1">
    <source>
        <dbReference type="HAMAP-Rule" id="MF_00164"/>
    </source>
</evidence>
<organism>
    <name type="scientific">Staphylococcus aureus (strain MSSA476)</name>
    <dbReference type="NCBI Taxonomy" id="282459"/>
    <lineage>
        <taxon>Bacteria</taxon>
        <taxon>Bacillati</taxon>
        <taxon>Bacillota</taxon>
        <taxon>Bacilli</taxon>
        <taxon>Bacillales</taxon>
        <taxon>Staphylococcaceae</taxon>
        <taxon>Staphylococcus</taxon>
    </lineage>
</organism>
<dbReference type="EC" id="2.6.1.16" evidence="1"/>
<dbReference type="EMBL" id="BX571857">
    <property type="protein sequence ID" value="CAG43864.1"/>
    <property type="molecule type" value="Genomic_DNA"/>
</dbReference>
<dbReference type="RefSeq" id="WP_000334465.1">
    <property type="nucleotide sequence ID" value="NC_002953.3"/>
</dbReference>
<dbReference type="SMR" id="Q6G7F8"/>
<dbReference type="KEGG" id="sas:SAS2055"/>
<dbReference type="HOGENOM" id="CLU_012520_7_1_9"/>
<dbReference type="GO" id="GO:0005829">
    <property type="term" value="C:cytosol"/>
    <property type="evidence" value="ECO:0007669"/>
    <property type="project" value="TreeGrafter"/>
</dbReference>
<dbReference type="GO" id="GO:0097367">
    <property type="term" value="F:carbohydrate derivative binding"/>
    <property type="evidence" value="ECO:0007669"/>
    <property type="project" value="InterPro"/>
</dbReference>
<dbReference type="GO" id="GO:0004360">
    <property type="term" value="F:glutamine-fructose-6-phosphate transaminase (isomerizing) activity"/>
    <property type="evidence" value="ECO:0007669"/>
    <property type="project" value="UniProtKB-UniRule"/>
</dbReference>
<dbReference type="GO" id="GO:0005975">
    <property type="term" value="P:carbohydrate metabolic process"/>
    <property type="evidence" value="ECO:0007669"/>
    <property type="project" value="UniProtKB-UniRule"/>
</dbReference>
<dbReference type="GO" id="GO:0006002">
    <property type="term" value="P:fructose 6-phosphate metabolic process"/>
    <property type="evidence" value="ECO:0007669"/>
    <property type="project" value="TreeGrafter"/>
</dbReference>
<dbReference type="GO" id="GO:0006487">
    <property type="term" value="P:protein N-linked glycosylation"/>
    <property type="evidence" value="ECO:0007669"/>
    <property type="project" value="TreeGrafter"/>
</dbReference>
<dbReference type="GO" id="GO:0006047">
    <property type="term" value="P:UDP-N-acetylglucosamine metabolic process"/>
    <property type="evidence" value="ECO:0007669"/>
    <property type="project" value="TreeGrafter"/>
</dbReference>
<dbReference type="CDD" id="cd00714">
    <property type="entry name" value="GFAT"/>
    <property type="match status" value="1"/>
</dbReference>
<dbReference type="CDD" id="cd05008">
    <property type="entry name" value="SIS_GlmS_GlmD_1"/>
    <property type="match status" value="1"/>
</dbReference>
<dbReference type="CDD" id="cd05009">
    <property type="entry name" value="SIS_GlmS_GlmD_2"/>
    <property type="match status" value="1"/>
</dbReference>
<dbReference type="FunFam" id="3.40.50.10490:FF:000001">
    <property type="entry name" value="Glutamine--fructose-6-phosphate aminotransferase [isomerizing]"/>
    <property type="match status" value="1"/>
</dbReference>
<dbReference type="FunFam" id="3.40.50.10490:FF:000022">
    <property type="entry name" value="Glutamine--fructose-6-phosphate aminotransferase [isomerizing]"/>
    <property type="match status" value="1"/>
</dbReference>
<dbReference type="FunFam" id="3.60.20.10:FF:000006">
    <property type="entry name" value="Glutamine--fructose-6-phosphate aminotransferase [isomerizing]"/>
    <property type="match status" value="1"/>
</dbReference>
<dbReference type="Gene3D" id="3.40.50.10490">
    <property type="entry name" value="Glucose-6-phosphate isomerase like protein, domain 1"/>
    <property type="match status" value="2"/>
</dbReference>
<dbReference type="Gene3D" id="3.60.20.10">
    <property type="entry name" value="Glutamine Phosphoribosylpyrophosphate, subunit 1, domain 1"/>
    <property type="match status" value="1"/>
</dbReference>
<dbReference type="HAMAP" id="MF_00164">
    <property type="entry name" value="GlmS"/>
    <property type="match status" value="1"/>
</dbReference>
<dbReference type="InterPro" id="IPR017932">
    <property type="entry name" value="GATase_2_dom"/>
</dbReference>
<dbReference type="InterPro" id="IPR005855">
    <property type="entry name" value="GFAT"/>
</dbReference>
<dbReference type="InterPro" id="IPR047084">
    <property type="entry name" value="GFAT_N"/>
</dbReference>
<dbReference type="InterPro" id="IPR035466">
    <property type="entry name" value="GlmS/AgaS_SIS"/>
</dbReference>
<dbReference type="InterPro" id="IPR035490">
    <property type="entry name" value="GlmS/FrlB_SIS"/>
</dbReference>
<dbReference type="InterPro" id="IPR029055">
    <property type="entry name" value="Ntn_hydrolases_N"/>
</dbReference>
<dbReference type="InterPro" id="IPR001347">
    <property type="entry name" value="SIS_dom"/>
</dbReference>
<dbReference type="InterPro" id="IPR046348">
    <property type="entry name" value="SIS_dom_sf"/>
</dbReference>
<dbReference type="NCBIfam" id="TIGR01135">
    <property type="entry name" value="glmS"/>
    <property type="match status" value="1"/>
</dbReference>
<dbReference type="NCBIfam" id="NF001484">
    <property type="entry name" value="PRK00331.1"/>
    <property type="match status" value="1"/>
</dbReference>
<dbReference type="PANTHER" id="PTHR10937">
    <property type="entry name" value="GLUCOSAMINE--FRUCTOSE-6-PHOSPHATE AMINOTRANSFERASE, ISOMERIZING"/>
    <property type="match status" value="1"/>
</dbReference>
<dbReference type="PANTHER" id="PTHR10937:SF0">
    <property type="entry name" value="GLUTAMINE--FRUCTOSE-6-PHOSPHATE TRANSAMINASE (ISOMERIZING)"/>
    <property type="match status" value="1"/>
</dbReference>
<dbReference type="Pfam" id="PF13522">
    <property type="entry name" value="GATase_6"/>
    <property type="match status" value="1"/>
</dbReference>
<dbReference type="Pfam" id="PF01380">
    <property type="entry name" value="SIS"/>
    <property type="match status" value="2"/>
</dbReference>
<dbReference type="SUPFAM" id="SSF56235">
    <property type="entry name" value="N-terminal nucleophile aminohydrolases (Ntn hydrolases)"/>
    <property type="match status" value="1"/>
</dbReference>
<dbReference type="SUPFAM" id="SSF53697">
    <property type="entry name" value="SIS domain"/>
    <property type="match status" value="1"/>
</dbReference>
<dbReference type="PROSITE" id="PS51278">
    <property type="entry name" value="GATASE_TYPE_2"/>
    <property type="match status" value="1"/>
</dbReference>
<dbReference type="PROSITE" id="PS51464">
    <property type="entry name" value="SIS"/>
    <property type="match status" value="2"/>
</dbReference>